<reference key="1">
    <citation type="submission" date="2007-06" db="EMBL/GenBank/DDBJ databases">
        <authorList>
            <person name="Dodson R.J."/>
            <person name="Harkins D."/>
            <person name="Paulsen I.T."/>
        </authorList>
    </citation>
    <scope>NUCLEOTIDE SEQUENCE [LARGE SCALE GENOMIC DNA]</scope>
    <source>
        <strain>DSM 24068 / PA7</strain>
    </source>
</reference>
<name>LPXH_PSEP7</name>
<accession>A6V730</accession>
<feature type="chain" id="PRO_1000025068" description="UDP-2,3-diacylglucosamine hydrolase">
    <location>
        <begin position="1"/>
        <end position="240"/>
    </location>
</feature>
<feature type="binding site" evidence="1">
    <location>
        <position position="8"/>
    </location>
    <ligand>
        <name>Mn(2+)</name>
        <dbReference type="ChEBI" id="CHEBI:29035"/>
        <label>1</label>
    </ligand>
</feature>
<feature type="binding site" evidence="1">
    <location>
        <position position="10"/>
    </location>
    <ligand>
        <name>Mn(2+)</name>
        <dbReference type="ChEBI" id="CHEBI:29035"/>
        <label>1</label>
    </ligand>
</feature>
<feature type="binding site" evidence="1">
    <location>
        <position position="41"/>
    </location>
    <ligand>
        <name>Mn(2+)</name>
        <dbReference type="ChEBI" id="CHEBI:29035"/>
        <label>1</label>
    </ligand>
</feature>
<feature type="binding site" evidence="1">
    <location>
        <position position="41"/>
    </location>
    <ligand>
        <name>Mn(2+)</name>
        <dbReference type="ChEBI" id="CHEBI:29035"/>
        <label>2</label>
    </ligand>
</feature>
<feature type="binding site" evidence="1">
    <location>
        <begin position="79"/>
        <end position="80"/>
    </location>
    <ligand>
        <name>substrate</name>
    </ligand>
</feature>
<feature type="binding site" evidence="1">
    <location>
        <position position="79"/>
    </location>
    <ligand>
        <name>Mn(2+)</name>
        <dbReference type="ChEBI" id="CHEBI:29035"/>
        <label>2</label>
    </ligand>
</feature>
<feature type="binding site" evidence="1">
    <location>
        <position position="114"/>
    </location>
    <ligand>
        <name>Mn(2+)</name>
        <dbReference type="ChEBI" id="CHEBI:29035"/>
        <label>2</label>
    </ligand>
</feature>
<feature type="binding site" evidence="1">
    <location>
        <position position="122"/>
    </location>
    <ligand>
        <name>substrate</name>
    </ligand>
</feature>
<feature type="binding site" evidence="1">
    <location>
        <position position="160"/>
    </location>
    <ligand>
        <name>substrate</name>
    </ligand>
</feature>
<feature type="binding site" evidence="1">
    <location>
        <position position="164"/>
    </location>
    <ligand>
        <name>substrate</name>
    </ligand>
</feature>
<feature type="binding site" evidence="1">
    <location>
        <position position="167"/>
    </location>
    <ligand>
        <name>substrate</name>
    </ligand>
</feature>
<feature type="binding site" evidence="1">
    <location>
        <position position="195"/>
    </location>
    <ligand>
        <name>Mn(2+)</name>
        <dbReference type="ChEBI" id="CHEBI:29035"/>
        <label>2</label>
    </ligand>
</feature>
<feature type="binding site" evidence="1">
    <location>
        <position position="195"/>
    </location>
    <ligand>
        <name>substrate</name>
    </ligand>
</feature>
<feature type="binding site" evidence="1">
    <location>
        <position position="197"/>
    </location>
    <ligand>
        <name>Mn(2+)</name>
        <dbReference type="ChEBI" id="CHEBI:29035"/>
        <label>1</label>
    </ligand>
</feature>
<organism>
    <name type="scientific">Pseudomonas paraeruginosa (strain DSM 24068 / PA7)</name>
    <name type="common">Pseudomonas aeruginosa (strain PA7)</name>
    <dbReference type="NCBI Taxonomy" id="381754"/>
    <lineage>
        <taxon>Bacteria</taxon>
        <taxon>Pseudomonadati</taxon>
        <taxon>Pseudomonadota</taxon>
        <taxon>Gammaproteobacteria</taxon>
        <taxon>Pseudomonadales</taxon>
        <taxon>Pseudomonadaceae</taxon>
        <taxon>Pseudomonas</taxon>
        <taxon>Pseudomonas paraeruginosa</taxon>
    </lineage>
</organism>
<sequence length="240" mass="27467">MSVLFISDLHLEAERPDITRAFLSFLDERARRAEALYILGDFFEAWIGDDGMDAFQHSIASALRQVADGGTRLYLMHGNRDFLIGQAFCREAGCTLLPDPSVIDLYGEPVLLMHGDSLCTRDEAYMRLRRWLRNPLTLWVLRHLPLATRHKLARKLRKESRAQTRMKAVDIIDVTPDEVPLAMRRHGVRTLIHGHTHRPAEHALEVDGQPARRIVLGDWDRQGWALEIDANGHRQAPFPL</sequence>
<protein>
    <recommendedName>
        <fullName evidence="1">UDP-2,3-diacylglucosamine hydrolase</fullName>
        <ecNumber evidence="1">3.6.1.54</ecNumber>
    </recommendedName>
    <alternativeName>
        <fullName evidence="1">UDP-2,3-diacylglucosamine diphosphatase</fullName>
    </alternativeName>
</protein>
<keyword id="KW-0997">Cell inner membrane</keyword>
<keyword id="KW-1003">Cell membrane</keyword>
<keyword id="KW-0378">Hydrolase</keyword>
<keyword id="KW-0441">Lipid A biosynthesis</keyword>
<keyword id="KW-0444">Lipid biosynthesis</keyword>
<keyword id="KW-0443">Lipid metabolism</keyword>
<keyword id="KW-0464">Manganese</keyword>
<keyword id="KW-0472">Membrane</keyword>
<keyword id="KW-0479">Metal-binding</keyword>
<dbReference type="EC" id="3.6.1.54" evidence="1"/>
<dbReference type="EMBL" id="CP000744">
    <property type="protein sequence ID" value="ABR85129.1"/>
    <property type="molecule type" value="Genomic_DNA"/>
</dbReference>
<dbReference type="RefSeq" id="WP_012076180.1">
    <property type="nucleotide sequence ID" value="NC_009656.1"/>
</dbReference>
<dbReference type="SMR" id="A6V730"/>
<dbReference type="KEGG" id="pap:PSPA7_3511"/>
<dbReference type="HOGENOM" id="CLU_074586_0_0_6"/>
<dbReference type="UniPathway" id="UPA00359">
    <property type="reaction ID" value="UER00480"/>
</dbReference>
<dbReference type="Proteomes" id="UP000001582">
    <property type="component" value="Chromosome"/>
</dbReference>
<dbReference type="GO" id="GO:0005737">
    <property type="term" value="C:cytoplasm"/>
    <property type="evidence" value="ECO:0007669"/>
    <property type="project" value="InterPro"/>
</dbReference>
<dbReference type="GO" id="GO:0019897">
    <property type="term" value="C:extrinsic component of plasma membrane"/>
    <property type="evidence" value="ECO:0007669"/>
    <property type="project" value="UniProtKB-UniRule"/>
</dbReference>
<dbReference type="GO" id="GO:0030145">
    <property type="term" value="F:manganese ion binding"/>
    <property type="evidence" value="ECO:0007669"/>
    <property type="project" value="UniProtKB-UniRule"/>
</dbReference>
<dbReference type="GO" id="GO:0008758">
    <property type="term" value="F:UDP-2,3-diacylglucosamine hydrolase activity"/>
    <property type="evidence" value="ECO:0007669"/>
    <property type="project" value="UniProtKB-UniRule"/>
</dbReference>
<dbReference type="GO" id="GO:0009245">
    <property type="term" value="P:lipid A biosynthetic process"/>
    <property type="evidence" value="ECO:0007669"/>
    <property type="project" value="UniProtKB-UniRule"/>
</dbReference>
<dbReference type="CDD" id="cd07398">
    <property type="entry name" value="MPP_YbbF-LpxH"/>
    <property type="match status" value="1"/>
</dbReference>
<dbReference type="Gene3D" id="3.60.21.10">
    <property type="match status" value="1"/>
</dbReference>
<dbReference type="HAMAP" id="MF_00575">
    <property type="entry name" value="LpxH"/>
    <property type="match status" value="1"/>
</dbReference>
<dbReference type="InterPro" id="IPR004843">
    <property type="entry name" value="Calcineurin-like_PHP_ApaH"/>
</dbReference>
<dbReference type="InterPro" id="IPR043461">
    <property type="entry name" value="LpxH-like"/>
</dbReference>
<dbReference type="InterPro" id="IPR029052">
    <property type="entry name" value="Metallo-depent_PP-like"/>
</dbReference>
<dbReference type="InterPro" id="IPR010138">
    <property type="entry name" value="UDP-diacylglucosamine_Hdrlase"/>
</dbReference>
<dbReference type="NCBIfam" id="TIGR01854">
    <property type="entry name" value="lipid_A_lpxH"/>
    <property type="match status" value="1"/>
</dbReference>
<dbReference type="NCBIfam" id="NF003743">
    <property type="entry name" value="PRK05340.1"/>
    <property type="match status" value="1"/>
</dbReference>
<dbReference type="PANTHER" id="PTHR34990:SF1">
    <property type="entry name" value="UDP-2,3-DIACYLGLUCOSAMINE HYDROLASE"/>
    <property type="match status" value="1"/>
</dbReference>
<dbReference type="PANTHER" id="PTHR34990">
    <property type="entry name" value="UDP-2,3-DIACYLGLUCOSAMINE HYDROLASE-RELATED"/>
    <property type="match status" value="1"/>
</dbReference>
<dbReference type="Pfam" id="PF00149">
    <property type="entry name" value="Metallophos"/>
    <property type="match status" value="1"/>
</dbReference>
<dbReference type="SUPFAM" id="SSF56300">
    <property type="entry name" value="Metallo-dependent phosphatases"/>
    <property type="match status" value="1"/>
</dbReference>
<comment type="function">
    <text evidence="1">Hydrolyzes the pyrophosphate bond of UDP-2,3-diacylglucosamine to yield 2,3-diacylglucosamine 1-phosphate (lipid X) and UMP by catalyzing the attack of water at the alpha-P atom. Involved in the biosynthesis of lipid A, a phosphorylated glycolipid that anchors the lipopolysaccharide to the outer membrane of the cell.</text>
</comment>
<comment type="catalytic activity">
    <reaction evidence="1">
        <text>UDP-2-N,3-O-bis[(3R)-3-hydroxytetradecanoyl]-alpha-D-glucosamine + H2O = 2-N,3-O-bis[(3R)-3-hydroxytetradecanoyl]-alpha-D-glucosaminyl 1-phosphate + UMP + 2 H(+)</text>
        <dbReference type="Rhea" id="RHEA:25213"/>
        <dbReference type="ChEBI" id="CHEBI:15377"/>
        <dbReference type="ChEBI" id="CHEBI:15378"/>
        <dbReference type="ChEBI" id="CHEBI:57865"/>
        <dbReference type="ChEBI" id="CHEBI:57957"/>
        <dbReference type="ChEBI" id="CHEBI:78847"/>
        <dbReference type="EC" id="3.6.1.54"/>
    </reaction>
</comment>
<comment type="cofactor">
    <cofactor evidence="1">
        <name>Mn(2+)</name>
        <dbReference type="ChEBI" id="CHEBI:29035"/>
    </cofactor>
    <text evidence="1">Binds 2 Mn(2+) ions per subunit in a binuclear metal center.</text>
</comment>
<comment type="pathway">
    <text evidence="1">Glycolipid biosynthesis; lipid IV(A) biosynthesis; lipid IV(A) from (3R)-3-hydroxytetradecanoyl-[acyl-carrier-protein] and UDP-N-acetyl-alpha-D-glucosamine: step 4/6.</text>
</comment>
<comment type="subcellular location">
    <subcellularLocation>
        <location evidence="1">Cell inner membrane</location>
        <topology evidence="1">Peripheral membrane protein</topology>
        <orientation evidence="1">Cytoplasmic side</orientation>
    </subcellularLocation>
</comment>
<comment type="similarity">
    <text evidence="1">Belongs to the LpxH family.</text>
</comment>
<proteinExistence type="inferred from homology"/>
<evidence type="ECO:0000255" key="1">
    <source>
        <dbReference type="HAMAP-Rule" id="MF_00575"/>
    </source>
</evidence>
<gene>
    <name evidence="1" type="primary">lpxH</name>
    <name type="ordered locus">PSPA7_3511</name>
</gene>